<organism evidence="8">
    <name type="scientific">Caenorhabditis elegans</name>
    <dbReference type="NCBI Taxonomy" id="6239"/>
    <lineage>
        <taxon>Eukaryota</taxon>
        <taxon>Metazoa</taxon>
        <taxon>Ecdysozoa</taxon>
        <taxon>Nematoda</taxon>
        <taxon>Chromadorea</taxon>
        <taxon>Rhabditida</taxon>
        <taxon>Rhabditina</taxon>
        <taxon>Rhabditomorpha</taxon>
        <taxon>Rhabditoidea</taxon>
        <taxon>Rhabditidae</taxon>
        <taxon>Peloderinae</taxon>
        <taxon>Caenorhabditis</taxon>
    </lineage>
</organism>
<name>DDI1_CAEEL</name>
<comment type="function">
    <text evidence="3 4">Aspartic protease. Required for the cleavage and activation of transcription factors such as isoform a of the transcription factor skn-1, which in turn regulates the expression of proteasomal subunits such as rpt-3 (PubMed:27528192). Plays a key role in the degradation of the potassium channel slo-1, perhaps acting directly, in cleaving slo-1 upstream of the ER-associated degradation pathway (ERAD), and also indirectly, via activation of the transcription factor skn-1, which mediates proteasomal homeostasis (PubMed:32502151).</text>
</comment>
<comment type="subcellular location">
    <subcellularLocation>
        <location evidence="3">Cytoplasm</location>
    </subcellularLocation>
    <subcellularLocation>
        <location evidence="3">Nucleus</location>
    </subcellularLocation>
    <text evidence="3">Mainly localizes to the nucleus during proteasomal disruption.</text>
</comment>
<comment type="tissue specificity">
    <text evidence="3">Expressed in most tissues.</text>
</comment>
<comment type="disruption phenotype">
    <text evidence="3">Increased sensitivity to low doses of bortezomib which causes proteasome dysfunction (PubMed:27528192). Double knockout with proteasomal subunit pbs-5 or with rpt-5 knockdown results in failed expression of the proteasomal subunit rpt-3 (PubMed:27528192). Double knockout with pbs-5 also results in the occasional mis-localization of the transcription factor skn-1a within gut nuclei (PubMed:27528192).</text>
</comment>
<comment type="similarity">
    <text evidence="6">Belongs to the DDI1 family.</text>
</comment>
<feature type="chain" id="PRO_0000442727" description="Protein DDI1 homolog 1">
    <location>
        <begin position="1"/>
        <end position="389"/>
    </location>
</feature>
<feature type="region of interest" description="Disordered" evidence="2">
    <location>
        <begin position="109"/>
        <end position="132"/>
    </location>
</feature>
<feature type="active site" evidence="6">
    <location>
        <position position="261"/>
    </location>
</feature>
<feature type="mutagenesis site" description="In mg543; defective expression of the proteasomal subunit rpt-3 in a pbs-5 (proteasomal subunit) mutant background." evidence="3">
    <original>M</original>
    <variation>I</variation>
    <location>
        <position position="244"/>
    </location>
</feature>
<feature type="mutagenesis site" description="In mg563; defective expression of the proteasomal subunit rpt-3 in a pbs-5 (proteasomal subunit) mutant background." evidence="3">
    <original>L</original>
    <variation>F</variation>
    <location>
        <position position="245"/>
    </location>
</feature>
<feature type="mutagenesis site" description="In mg572; fails to cleave isoform a of the transcription factor skn-1 (skn-1a). Defective expression of the proteasomal subunit rpt-3 in a pbs-5 (proteasomal subunit) mutant background." evidence="3">
    <original>DSG</original>
    <variation>NSA</variation>
    <location>
        <begin position="261"/>
        <end position="263"/>
    </location>
</feature>
<feature type="mutagenesis site" description="In mg572; restores the levels of slo-1 in erg-28 mutant background; when associated with A-263." evidence="4">
    <original>D</original>
    <variation>N</variation>
    <location>
        <position position="261"/>
    </location>
</feature>
<feature type="mutagenesis site" description="In mg572; restores the levels of slo-1 in erg-28 mutant background; when associated with N-261." evidence="4">
    <original>G</original>
    <variation>A</variation>
    <location>
        <position position="263"/>
    </location>
</feature>
<feature type="mutagenesis site" description="In mg555; defective expression of the proteasomal subunit rpt-3 in a pbs-5 (proteasomal subunit) mutant background." evidence="3">
    <original>C</original>
    <variation>S</variation>
    <location>
        <position position="277"/>
    </location>
</feature>
<feature type="mutagenesis site" description="In mg544; defective expression of the proteasomal subunit rpt-3 in a pbs-5 (proteasomal subunit) mutant background." evidence="3">
    <original>G</original>
    <variation>R</variation>
    <location>
        <position position="293"/>
    </location>
</feature>
<feature type="mutagenesis site" description="In mg557; defective expression of the proteasomal subunit rpt-3 in a pbs-5 (proteasomal subunit) mutant background." evidence="3">
    <original>L</original>
    <variation>F</variation>
    <location>
        <position position="334"/>
    </location>
</feature>
<gene>
    <name evidence="5 9" type="primary">ddi-1</name>
    <name evidence="9" type="ORF">C01G5.6</name>
</gene>
<evidence type="ECO:0000250" key="1">
    <source>
        <dbReference type="UniProtKB" id="Q8WTU0"/>
    </source>
</evidence>
<evidence type="ECO:0000256" key="2">
    <source>
        <dbReference type="SAM" id="MobiDB-lite"/>
    </source>
</evidence>
<evidence type="ECO:0000269" key="3">
    <source>
    </source>
</evidence>
<evidence type="ECO:0000269" key="4">
    <source>
    </source>
</evidence>
<evidence type="ECO:0000303" key="5">
    <source>
    </source>
</evidence>
<evidence type="ECO:0000305" key="6"/>
<evidence type="ECO:0000305" key="7">
    <source>
    </source>
</evidence>
<evidence type="ECO:0000312" key="8">
    <source>
        <dbReference type="Proteomes" id="UP000001940"/>
    </source>
</evidence>
<evidence type="ECO:0000312" key="9">
    <source>
        <dbReference type="WormBase" id="C01G5.6"/>
    </source>
</evidence>
<protein>
    <recommendedName>
        <fullName evidence="1">Protein DDI1 homolog 1</fullName>
        <ecNumber evidence="7">3.4.23.-</ecNumber>
    </recommendedName>
</protein>
<accession>Q17569</accession>
<dbReference type="EC" id="3.4.23.-" evidence="7"/>
<dbReference type="EMBL" id="BX284604">
    <property type="protein sequence ID" value="CCD62447.1"/>
    <property type="molecule type" value="Genomic_DNA"/>
</dbReference>
<dbReference type="PIR" id="T30993">
    <property type="entry name" value="T30993"/>
</dbReference>
<dbReference type="RefSeq" id="NP_500992.1">
    <property type="nucleotide sequence ID" value="NM_068591.5"/>
</dbReference>
<dbReference type="SMR" id="Q17569"/>
<dbReference type="FunCoup" id="Q17569">
    <property type="interactions" value="396"/>
</dbReference>
<dbReference type="IntAct" id="Q17569">
    <property type="interactions" value="2"/>
</dbReference>
<dbReference type="MINT" id="Q17569"/>
<dbReference type="STRING" id="6239.C01G5.6.1"/>
<dbReference type="MEROPS" id="A28.A02"/>
<dbReference type="PaxDb" id="6239-C01G5.6"/>
<dbReference type="PeptideAtlas" id="Q17569"/>
<dbReference type="EnsemblMetazoa" id="C01G5.6.1">
    <property type="protein sequence ID" value="C01G5.6.1"/>
    <property type="gene ID" value="WBGene00015308"/>
</dbReference>
<dbReference type="GeneID" id="177413"/>
<dbReference type="KEGG" id="cel:CELE_C01G5.6"/>
<dbReference type="UCSC" id="C01G5.6">
    <property type="organism name" value="c. elegans"/>
</dbReference>
<dbReference type="AGR" id="WB:WBGene00015308"/>
<dbReference type="CTD" id="177413"/>
<dbReference type="WormBase" id="C01G5.6">
    <property type="protein sequence ID" value="CE23513"/>
    <property type="gene ID" value="WBGene00015308"/>
    <property type="gene designation" value="ddi-1"/>
</dbReference>
<dbReference type="eggNOG" id="KOG0012">
    <property type="taxonomic scope" value="Eukaryota"/>
</dbReference>
<dbReference type="GeneTree" id="ENSGT00950000182999"/>
<dbReference type="HOGENOM" id="CLU_726138_0_0_1"/>
<dbReference type="InParanoid" id="Q17569"/>
<dbReference type="OMA" id="YTTAFPC"/>
<dbReference type="OrthoDB" id="1047367at2759"/>
<dbReference type="PhylomeDB" id="Q17569"/>
<dbReference type="PRO" id="PR:Q17569"/>
<dbReference type="Proteomes" id="UP000001940">
    <property type="component" value="Chromosome IV"/>
</dbReference>
<dbReference type="Bgee" id="WBGene00015308">
    <property type="expression patterns" value="Expressed in germ line (C elegans) and 4 other cell types or tissues"/>
</dbReference>
<dbReference type="GO" id="GO:0005737">
    <property type="term" value="C:cytoplasm"/>
    <property type="evidence" value="ECO:0000314"/>
    <property type="project" value="WormBase"/>
</dbReference>
<dbReference type="GO" id="GO:0005634">
    <property type="term" value="C:nucleus"/>
    <property type="evidence" value="ECO:0000314"/>
    <property type="project" value="WormBase"/>
</dbReference>
<dbReference type="GO" id="GO:0004190">
    <property type="term" value="F:aspartic-type endopeptidase activity"/>
    <property type="evidence" value="ECO:0007669"/>
    <property type="project" value="UniProtKB-KW"/>
</dbReference>
<dbReference type="GO" id="GO:0051964">
    <property type="term" value="P:negative regulation of synapse assembly"/>
    <property type="evidence" value="ECO:0000315"/>
    <property type="project" value="WormBase"/>
</dbReference>
<dbReference type="GO" id="GO:0006508">
    <property type="term" value="P:proteolysis"/>
    <property type="evidence" value="ECO:0007669"/>
    <property type="project" value="UniProtKB-KW"/>
</dbReference>
<dbReference type="CDD" id="cd05479">
    <property type="entry name" value="RP_DDI"/>
    <property type="match status" value="1"/>
</dbReference>
<dbReference type="FunFam" id="2.40.70.10:FF:000072">
    <property type="entry name" value="DNA damage-inducible protein"/>
    <property type="match status" value="1"/>
</dbReference>
<dbReference type="Gene3D" id="2.40.70.10">
    <property type="entry name" value="Acid Proteases"/>
    <property type="match status" value="1"/>
</dbReference>
<dbReference type="InterPro" id="IPR019103">
    <property type="entry name" value="Peptidase_aspartic_DDI1-type"/>
</dbReference>
<dbReference type="InterPro" id="IPR021109">
    <property type="entry name" value="Peptidase_aspartic_dom_sf"/>
</dbReference>
<dbReference type="PANTHER" id="PTHR12917">
    <property type="entry name" value="ASPARTYL PROTEASE DDI-RELATED"/>
    <property type="match status" value="1"/>
</dbReference>
<dbReference type="PANTHER" id="PTHR12917:SF1">
    <property type="entry name" value="AT13091P"/>
    <property type="match status" value="1"/>
</dbReference>
<dbReference type="Pfam" id="PF09668">
    <property type="entry name" value="Asp_protease"/>
    <property type="match status" value="1"/>
</dbReference>
<dbReference type="SUPFAM" id="SSF50630">
    <property type="entry name" value="Acid proteases"/>
    <property type="match status" value="1"/>
</dbReference>
<sequence>MSFQVSVAVNDGPFQKKSVTPNTTIGDLNNDAILIWKDTAIVYDISDESKNFGPTVTLEQLGVTQISMVYIYTTAFPCPSGDLRSIVPAQVRLISQFASAASSIFNGQSSSSAQSAQRTRRVEQDDEGEKSMFSRKLLDSPATFKALSENMFFRLKNEPHKLGYGLPELVERFLAKKDMTYKEFEQMFRSYVEEEVHKEEIIKNNPNSAEAKMFLEAKRNKELIDEQYLHSMTHHPEDMIAVTMLYINLTINGVPVKAFIDSGAQKSIMSMACAERCGLNGLIDRRFQSMARGVGGTEKIEGKIHLCDVKVEDAHFSCPFEVMARREMDLLIGLNVLRKHGCCINLKTSRLEFGNGTTTPFLQSNEIDSHLKEIMALPEEEMQFEDGST</sequence>
<reference evidence="8" key="1">
    <citation type="journal article" date="1998" name="Science">
        <title>Genome sequence of the nematode C. elegans: a platform for investigating biology.</title>
        <authorList>
            <consortium name="The C. elegans sequencing consortium"/>
        </authorList>
    </citation>
    <scope>NUCLEOTIDE SEQUENCE [LARGE SCALE GENOMIC DNA]</scope>
    <source>
        <strain evidence="8">Bristol N2</strain>
    </source>
</reference>
<reference evidence="6" key="2">
    <citation type="journal article" date="2016" name="Elife">
        <title>Proteasome dysfunction triggers activation of SKN-1A/Nrf1 by the aspartic protease DDI-1.</title>
        <authorList>
            <person name="Lehrbach N.J."/>
            <person name="Ruvkun G."/>
        </authorList>
    </citation>
    <scope>FUNCTION</scope>
    <scope>CATALYTIC ACTIVITY</scope>
    <scope>SUBCELLULAR LOCATION</scope>
    <scope>TISSUE SPECIFICITY</scope>
    <scope>DISRUPTION PHENOTYPE</scope>
    <scope>MUTAGENESIS OF MET-244; LEU-245; 261-ASP--GLY-263; CYS-277; GLY-293 AND LEU-334</scope>
</reference>
<reference evidence="6" key="3">
    <citation type="journal article" date="2020" name="PLoS Genet.">
        <title>BK channel density is regulated by endoplasmic reticulum associated degradation and influenced by the SKN-1A/NRF1 transcription factor.</title>
        <authorList>
            <person name="Cheung T.P."/>
            <person name="Choe J.Y."/>
            <person name="Richmond J.E."/>
            <person name="Kim H."/>
        </authorList>
    </citation>
    <scope>FUNCTION</scope>
    <scope>MUTAGENESIS OF ASP-261 AND GLY-263</scope>
</reference>
<proteinExistence type="evidence at protein level"/>
<keyword id="KW-0064">Aspartyl protease</keyword>
<keyword id="KW-0963">Cytoplasm</keyword>
<keyword id="KW-0378">Hydrolase</keyword>
<keyword id="KW-0539">Nucleus</keyword>
<keyword id="KW-0645">Protease</keyword>
<keyword id="KW-1185">Reference proteome</keyword>